<name>Y1202_LIMRJ</name>
<gene>
    <name type="ordered locus">LAR_1202</name>
</gene>
<reference key="1">
    <citation type="journal article" date="2008" name="DNA Res.">
        <title>Comparative genome analysis of Lactobacillus reuteri and Lactobacillus fermentum reveal a genomic island for reuterin and cobalamin production.</title>
        <authorList>
            <person name="Morita H."/>
            <person name="Toh H."/>
            <person name="Fukuda S."/>
            <person name="Horikawa H."/>
            <person name="Oshima K."/>
            <person name="Suzuki T."/>
            <person name="Murakami M."/>
            <person name="Hisamatsu S."/>
            <person name="Kato Y."/>
            <person name="Takizawa T."/>
            <person name="Fukuoka H."/>
            <person name="Yoshimura T."/>
            <person name="Itoh K."/>
            <person name="O'Sullivan D.J."/>
            <person name="McKay L.L."/>
            <person name="Ohno H."/>
            <person name="Kikuchi J."/>
            <person name="Masaoka T."/>
            <person name="Hattori M."/>
        </authorList>
    </citation>
    <scope>NUCLEOTIDE SEQUENCE [LARGE SCALE GENOMIC DNA]</scope>
    <source>
        <strain>JCM 1112</strain>
    </source>
</reference>
<protein>
    <recommendedName>
        <fullName evidence="1">UPF0342 protein LAR_1202</fullName>
    </recommendedName>
</protein>
<comment type="similarity">
    <text evidence="1">Belongs to the UPF0342 family.</text>
</comment>
<evidence type="ECO:0000255" key="1">
    <source>
        <dbReference type="HAMAP-Rule" id="MF_01526"/>
    </source>
</evidence>
<feature type="chain" id="PRO_1000198525" description="UPF0342 protein LAR_1202">
    <location>
        <begin position="1"/>
        <end position="123"/>
    </location>
</feature>
<sequence>MVVNIYDTANELSRQLRETQEYQGLQKAFEALKADGDTFDTFKKFQQAQADAQHKQMTGQQPTDDEIKNIQNLAKEVSGKKVVQDLMNQERQVDSMLQQLNKTITSPIQDLYSEVMPKMPGQE</sequence>
<organism>
    <name type="scientific">Limosilactobacillus reuteri subsp. reuteri (strain JCM 1112)</name>
    <name type="common">Lactobacillus reuteri</name>
    <dbReference type="NCBI Taxonomy" id="557433"/>
    <lineage>
        <taxon>Bacteria</taxon>
        <taxon>Bacillati</taxon>
        <taxon>Bacillota</taxon>
        <taxon>Bacilli</taxon>
        <taxon>Lactobacillales</taxon>
        <taxon>Lactobacillaceae</taxon>
        <taxon>Limosilactobacillus</taxon>
    </lineage>
</organism>
<accession>B2G8D6</accession>
<dbReference type="EMBL" id="AP007281">
    <property type="protein sequence ID" value="BAG25718.1"/>
    <property type="molecule type" value="Genomic_DNA"/>
</dbReference>
<dbReference type="RefSeq" id="WP_003668516.1">
    <property type="nucleotide sequence ID" value="NC_010609.1"/>
</dbReference>
<dbReference type="SMR" id="B2G8D6"/>
<dbReference type="KEGG" id="lrf:LAR_1202"/>
<dbReference type="HOGENOM" id="CLU_140243_3_1_9"/>
<dbReference type="Gene3D" id="1.20.1500.10">
    <property type="entry name" value="YheA/YmcA-like"/>
    <property type="match status" value="1"/>
</dbReference>
<dbReference type="HAMAP" id="MF_01526">
    <property type="entry name" value="UPF0342"/>
    <property type="match status" value="1"/>
</dbReference>
<dbReference type="InterPro" id="IPR010368">
    <property type="entry name" value="Com_YlbF"/>
</dbReference>
<dbReference type="InterPro" id="IPR023378">
    <property type="entry name" value="YheA/YmcA-like_dom_sf"/>
</dbReference>
<dbReference type="Pfam" id="PF06133">
    <property type="entry name" value="Com_YlbF"/>
    <property type="match status" value="1"/>
</dbReference>
<dbReference type="SUPFAM" id="SSF158622">
    <property type="entry name" value="YheA/YmcA-like"/>
    <property type="match status" value="1"/>
</dbReference>
<proteinExistence type="inferred from homology"/>